<accession>Q98PD1</accession>
<evidence type="ECO:0000255" key="1">
    <source>
        <dbReference type="HAMAP-Rule" id="MF_00099"/>
    </source>
</evidence>
<geneLocation type="plasmid">
    <name>pMLb</name>
</geneLocation>
<name>CHEB_RHILO</name>
<gene>
    <name evidence="1" type="primary">cheB</name>
    <name type="ordered locus">mll9510</name>
</gene>
<proteinExistence type="inferred from homology"/>
<feature type="chain" id="PRO_0000158018" description="Protein-glutamate methylesterase/protein-glutamine glutaminase">
    <location>
        <begin position="1"/>
        <end position="339"/>
    </location>
</feature>
<feature type="domain" description="Response regulatory" evidence="1">
    <location>
        <begin position="2"/>
        <end position="119"/>
    </location>
</feature>
<feature type="domain" description="CheB-type methylesterase" evidence="1">
    <location>
        <begin position="149"/>
        <end position="338"/>
    </location>
</feature>
<feature type="active site" evidence="1">
    <location>
        <position position="160"/>
    </location>
</feature>
<feature type="active site" evidence="1">
    <location>
        <position position="187"/>
    </location>
</feature>
<feature type="active site" evidence="1">
    <location>
        <position position="280"/>
    </location>
</feature>
<feature type="modified residue" description="4-aspartylphosphate" evidence="1">
    <location>
        <position position="53"/>
    </location>
</feature>
<dbReference type="EC" id="3.1.1.61" evidence="1"/>
<dbReference type="EC" id="3.5.1.44" evidence="1"/>
<dbReference type="EMBL" id="AP003017">
    <property type="protein sequence ID" value="BAB54724.1"/>
    <property type="molecule type" value="Genomic_DNA"/>
</dbReference>
<dbReference type="RefSeq" id="WP_010916252.1">
    <property type="nucleotide sequence ID" value="NC_002682.1"/>
</dbReference>
<dbReference type="SMR" id="Q98PD1"/>
<dbReference type="KEGG" id="mlo:mll9510"/>
<dbReference type="eggNOG" id="COG2201">
    <property type="taxonomic scope" value="Bacteria"/>
</dbReference>
<dbReference type="HOGENOM" id="CLU_000445_51_0_5"/>
<dbReference type="Proteomes" id="UP000000552">
    <property type="component" value="Plasmid pMLb"/>
</dbReference>
<dbReference type="GO" id="GO:0005737">
    <property type="term" value="C:cytoplasm"/>
    <property type="evidence" value="ECO:0007669"/>
    <property type="project" value="UniProtKB-SubCell"/>
</dbReference>
<dbReference type="GO" id="GO:0000156">
    <property type="term" value="F:phosphorelay response regulator activity"/>
    <property type="evidence" value="ECO:0007669"/>
    <property type="project" value="InterPro"/>
</dbReference>
<dbReference type="GO" id="GO:0008984">
    <property type="term" value="F:protein-glutamate methylesterase activity"/>
    <property type="evidence" value="ECO:0007669"/>
    <property type="project" value="UniProtKB-UniRule"/>
</dbReference>
<dbReference type="GO" id="GO:0050568">
    <property type="term" value="F:protein-glutamine glutaminase activity"/>
    <property type="evidence" value="ECO:0007669"/>
    <property type="project" value="UniProtKB-UniRule"/>
</dbReference>
<dbReference type="GO" id="GO:0006935">
    <property type="term" value="P:chemotaxis"/>
    <property type="evidence" value="ECO:0007669"/>
    <property type="project" value="UniProtKB-UniRule"/>
</dbReference>
<dbReference type="CDD" id="cd16432">
    <property type="entry name" value="CheB_Rec"/>
    <property type="match status" value="1"/>
</dbReference>
<dbReference type="CDD" id="cd17541">
    <property type="entry name" value="REC_CheB-like"/>
    <property type="match status" value="1"/>
</dbReference>
<dbReference type="Gene3D" id="3.40.50.2300">
    <property type="match status" value="1"/>
</dbReference>
<dbReference type="Gene3D" id="3.40.50.180">
    <property type="entry name" value="Methylesterase CheB, C-terminal domain"/>
    <property type="match status" value="1"/>
</dbReference>
<dbReference type="HAMAP" id="MF_00099">
    <property type="entry name" value="CheB_chemtxs"/>
    <property type="match status" value="1"/>
</dbReference>
<dbReference type="InterPro" id="IPR008248">
    <property type="entry name" value="CheB-like"/>
</dbReference>
<dbReference type="InterPro" id="IPR035909">
    <property type="entry name" value="CheB_C"/>
</dbReference>
<dbReference type="InterPro" id="IPR011006">
    <property type="entry name" value="CheY-like_superfamily"/>
</dbReference>
<dbReference type="InterPro" id="IPR000673">
    <property type="entry name" value="Sig_transdc_resp-reg_Me-estase"/>
</dbReference>
<dbReference type="InterPro" id="IPR001789">
    <property type="entry name" value="Sig_transdc_resp-reg_receiver"/>
</dbReference>
<dbReference type="NCBIfam" id="NF009206">
    <property type="entry name" value="PRK12555.1"/>
    <property type="match status" value="1"/>
</dbReference>
<dbReference type="PANTHER" id="PTHR42872">
    <property type="entry name" value="PROTEIN-GLUTAMATE METHYLESTERASE/PROTEIN-GLUTAMINE GLUTAMINASE"/>
    <property type="match status" value="1"/>
</dbReference>
<dbReference type="PANTHER" id="PTHR42872:SF6">
    <property type="entry name" value="PROTEIN-GLUTAMATE METHYLESTERASE_PROTEIN-GLUTAMINE GLUTAMINASE"/>
    <property type="match status" value="1"/>
</dbReference>
<dbReference type="Pfam" id="PF01339">
    <property type="entry name" value="CheB_methylest"/>
    <property type="match status" value="1"/>
</dbReference>
<dbReference type="Pfam" id="PF00072">
    <property type="entry name" value="Response_reg"/>
    <property type="match status" value="1"/>
</dbReference>
<dbReference type="PIRSF" id="PIRSF000876">
    <property type="entry name" value="RR_chemtxs_CheB"/>
    <property type="match status" value="1"/>
</dbReference>
<dbReference type="SMART" id="SM00448">
    <property type="entry name" value="REC"/>
    <property type="match status" value="1"/>
</dbReference>
<dbReference type="SUPFAM" id="SSF52172">
    <property type="entry name" value="CheY-like"/>
    <property type="match status" value="1"/>
</dbReference>
<dbReference type="SUPFAM" id="SSF52738">
    <property type="entry name" value="Methylesterase CheB, C-terminal domain"/>
    <property type="match status" value="1"/>
</dbReference>
<dbReference type="PROSITE" id="PS50122">
    <property type="entry name" value="CHEB"/>
    <property type="match status" value="1"/>
</dbReference>
<dbReference type="PROSITE" id="PS50110">
    <property type="entry name" value="RESPONSE_REGULATORY"/>
    <property type="match status" value="1"/>
</dbReference>
<comment type="function">
    <text evidence="1">Involved in chemotaxis. Part of a chemotaxis signal transduction system that modulates chemotaxis in response to various stimuli. Catalyzes the demethylation of specific methylglutamate residues introduced into the chemoreceptors (methyl-accepting chemotaxis proteins or MCP) by CheR. Also mediates the irreversible deamidation of specific glutamine residues to glutamic acid.</text>
</comment>
<comment type="catalytic activity">
    <reaction evidence="1">
        <text>[protein]-L-glutamate 5-O-methyl ester + H2O = L-glutamyl-[protein] + methanol + H(+)</text>
        <dbReference type="Rhea" id="RHEA:23236"/>
        <dbReference type="Rhea" id="RHEA-COMP:10208"/>
        <dbReference type="Rhea" id="RHEA-COMP:10311"/>
        <dbReference type="ChEBI" id="CHEBI:15377"/>
        <dbReference type="ChEBI" id="CHEBI:15378"/>
        <dbReference type="ChEBI" id="CHEBI:17790"/>
        <dbReference type="ChEBI" id="CHEBI:29973"/>
        <dbReference type="ChEBI" id="CHEBI:82795"/>
        <dbReference type="EC" id="3.1.1.61"/>
    </reaction>
</comment>
<comment type="catalytic activity">
    <reaction evidence="1">
        <text>L-glutaminyl-[protein] + H2O = L-glutamyl-[protein] + NH4(+)</text>
        <dbReference type="Rhea" id="RHEA:16441"/>
        <dbReference type="Rhea" id="RHEA-COMP:10207"/>
        <dbReference type="Rhea" id="RHEA-COMP:10208"/>
        <dbReference type="ChEBI" id="CHEBI:15377"/>
        <dbReference type="ChEBI" id="CHEBI:28938"/>
        <dbReference type="ChEBI" id="CHEBI:29973"/>
        <dbReference type="ChEBI" id="CHEBI:30011"/>
        <dbReference type="EC" id="3.5.1.44"/>
    </reaction>
</comment>
<comment type="subcellular location">
    <subcellularLocation>
        <location evidence="1">Cytoplasm</location>
    </subcellularLocation>
</comment>
<comment type="domain">
    <text evidence="1">Contains a C-terminal catalytic domain, and an N-terminal region which modulates catalytic activity.</text>
</comment>
<comment type="PTM">
    <text evidence="1">Phosphorylated by CheA. Phosphorylation of the N-terminal regulatory domain activates the methylesterase activity.</text>
</comment>
<comment type="similarity">
    <text evidence="1">Belongs to the CheB family.</text>
</comment>
<keyword id="KW-0145">Chemotaxis</keyword>
<keyword id="KW-0963">Cytoplasm</keyword>
<keyword id="KW-0378">Hydrolase</keyword>
<keyword id="KW-0597">Phosphoprotein</keyword>
<keyword id="KW-0614">Plasmid</keyword>
<protein>
    <recommendedName>
        <fullName evidence="1">Protein-glutamate methylesterase/protein-glutamine glutaminase</fullName>
        <ecNumber evidence="1">3.1.1.61</ecNumber>
        <ecNumber evidence="1">3.5.1.44</ecNumber>
    </recommendedName>
</protein>
<reference key="1">
    <citation type="journal article" date="2000" name="DNA Res.">
        <title>Complete genome structure of the nitrogen-fixing symbiotic bacterium Mesorhizobium loti.</title>
        <authorList>
            <person name="Kaneko T."/>
            <person name="Nakamura Y."/>
            <person name="Sato S."/>
            <person name="Asamizu E."/>
            <person name="Kato T."/>
            <person name="Sasamoto S."/>
            <person name="Watanabe A."/>
            <person name="Idesawa K."/>
            <person name="Ishikawa A."/>
            <person name="Kawashima K."/>
            <person name="Kimura T."/>
            <person name="Kishida Y."/>
            <person name="Kiyokawa C."/>
            <person name="Kohara M."/>
            <person name="Matsumoto M."/>
            <person name="Matsuno A."/>
            <person name="Mochizuki Y."/>
            <person name="Nakayama S."/>
            <person name="Nakazaki N."/>
            <person name="Shimpo S."/>
            <person name="Sugimoto M."/>
            <person name="Takeuchi C."/>
            <person name="Yamada M."/>
            <person name="Tabata S."/>
        </authorList>
    </citation>
    <scope>NUCLEOTIDE SEQUENCE [LARGE SCALE GENOMIC DNA]</scope>
    <source>
        <strain>LMG 29417 / CECT 9101 / MAFF 303099</strain>
    </source>
</reference>
<organism>
    <name type="scientific">Mesorhizobium japonicum (strain LMG 29417 / CECT 9101 / MAFF 303099)</name>
    <name type="common">Mesorhizobium loti (strain MAFF 303099)</name>
    <dbReference type="NCBI Taxonomy" id="266835"/>
    <lineage>
        <taxon>Bacteria</taxon>
        <taxon>Pseudomonadati</taxon>
        <taxon>Pseudomonadota</taxon>
        <taxon>Alphaproteobacteria</taxon>
        <taxon>Hyphomicrobiales</taxon>
        <taxon>Phyllobacteriaceae</taxon>
        <taxon>Mesorhizobium</taxon>
    </lineage>
</organism>
<sequence length="339" mass="35890">MRIGVVNDMPMAVELLRRLVLSTGEHQVAWIATNGREAVEVCRRDLPDLILMDLAMPVMDGVEATRRIMAETPCSILLVTASIESNLADVYEAMGHGALDAVDIPSVGIEGNASSQSARLLTNKIATIGKLIGDAPTKAKRRMSRAAEPTPRRLIAIGASAGGPAAVAAVLSAFPVDFGGAIVLVQHLDAQFVPGLVDWLGQHTPLPIRPARERDSPQAGTVLVASSADHLVFKSVQQLGYTPSPKDNVYRPSVDVFFESAAQWWPGSVIGVLLTGMGRDGARGLRQLRDKGHLTIAQDRATSAVYGMPKAAADIGAAVDILPLSAIGSRIIEACERST</sequence>